<gene>
    <name evidence="1" type="primary">dnaK</name>
    <name type="ordered locus">Hac_1468</name>
</gene>
<sequence length="620" mass="67044">MGKVIGIDLGTTNSAMAVYEGNEAKIIANKEGKNTTPSIVAFTDKGEILVGESAKRQAVTNPEKTIYSIKRIMGLMFNEEKAKEAEKRLPYKIVDRNGACAIEISGKVYTPQEISAKILMKLKEDAESYLGESVTEAVITVPAYFNDSQRKATKEAGTIAGLNVLRIINEPTSAALAYGLDKKESEKIMVYDLGGGTFDVTVLETGDNVVEVLATGGDAFLGGDDFDNRVIDFLATEFKNETGIEIKNDVMALQRLKEAAENAKKELSSAMETEINLPFITADATGPKHLVKKLTRAKFESLTEDLIEETISKIEGVIKDAGLTKNEISEVVMVGGSTRIPKVQERVKGFINKELNKSVNPDEVVAVGASIQGGVLKGDVKDVLLLDVTPLSLGIETLGGVMTKVIDRGTTIPAKKSQVFSTAEDNQPAVSIMVLQGERDLARDNKSLGKFDLQGIAPAPRGVPQIEVTFDIDANGILTVSAQDKNTGKSQEIKISGSSGLSDSEIEKMVKDAELHKEEDARKKEVIEARNHADSLAHQTQKSLDEHKANLNENDANEIQNAINALKDCIKNDNATKAELEDKTKALVQAAQKLGEAMANKNNAEQPKKKDDDVIDAEVE</sequence>
<organism>
    <name type="scientific">Helicobacter acinonychis (strain Sheeba)</name>
    <dbReference type="NCBI Taxonomy" id="382638"/>
    <lineage>
        <taxon>Bacteria</taxon>
        <taxon>Pseudomonadati</taxon>
        <taxon>Campylobacterota</taxon>
        <taxon>Epsilonproteobacteria</taxon>
        <taxon>Campylobacterales</taxon>
        <taxon>Helicobacteraceae</taxon>
        <taxon>Helicobacter</taxon>
    </lineage>
</organism>
<proteinExistence type="inferred from homology"/>
<name>DNAK_HELAH</name>
<dbReference type="EMBL" id="AM260522">
    <property type="protein sequence ID" value="CAK00192.1"/>
    <property type="molecule type" value="Genomic_DNA"/>
</dbReference>
<dbReference type="RefSeq" id="WP_011578282.1">
    <property type="nucleotide sequence ID" value="NC_008229.1"/>
</dbReference>
<dbReference type="SMR" id="Q17VY4"/>
<dbReference type="STRING" id="382638.Hac_1468"/>
<dbReference type="GeneID" id="31758751"/>
<dbReference type="KEGG" id="hac:Hac_1468"/>
<dbReference type="eggNOG" id="COG0443">
    <property type="taxonomic scope" value="Bacteria"/>
</dbReference>
<dbReference type="HOGENOM" id="CLU_005965_2_3_7"/>
<dbReference type="Proteomes" id="UP000000775">
    <property type="component" value="Chromosome"/>
</dbReference>
<dbReference type="GO" id="GO:0005524">
    <property type="term" value="F:ATP binding"/>
    <property type="evidence" value="ECO:0007669"/>
    <property type="project" value="UniProtKB-UniRule"/>
</dbReference>
<dbReference type="GO" id="GO:0140662">
    <property type="term" value="F:ATP-dependent protein folding chaperone"/>
    <property type="evidence" value="ECO:0007669"/>
    <property type="project" value="InterPro"/>
</dbReference>
<dbReference type="GO" id="GO:0051082">
    <property type="term" value="F:unfolded protein binding"/>
    <property type="evidence" value="ECO:0007669"/>
    <property type="project" value="InterPro"/>
</dbReference>
<dbReference type="CDD" id="cd10234">
    <property type="entry name" value="ASKHA_NBD_HSP70_DnaK-like"/>
    <property type="match status" value="1"/>
</dbReference>
<dbReference type="FunFam" id="2.60.34.10:FF:000014">
    <property type="entry name" value="Chaperone protein DnaK HSP70"/>
    <property type="match status" value="1"/>
</dbReference>
<dbReference type="FunFam" id="1.20.1270.10:FF:000001">
    <property type="entry name" value="Molecular chaperone DnaK"/>
    <property type="match status" value="1"/>
</dbReference>
<dbReference type="FunFam" id="3.30.420.40:FF:000004">
    <property type="entry name" value="Molecular chaperone DnaK"/>
    <property type="match status" value="1"/>
</dbReference>
<dbReference type="FunFam" id="3.90.640.10:FF:000003">
    <property type="entry name" value="Molecular chaperone DnaK"/>
    <property type="match status" value="1"/>
</dbReference>
<dbReference type="Gene3D" id="1.20.1270.10">
    <property type="match status" value="1"/>
</dbReference>
<dbReference type="Gene3D" id="3.30.420.40">
    <property type="match status" value="2"/>
</dbReference>
<dbReference type="Gene3D" id="3.90.640.10">
    <property type="entry name" value="Actin, Chain A, domain 4"/>
    <property type="match status" value="1"/>
</dbReference>
<dbReference type="Gene3D" id="2.60.34.10">
    <property type="entry name" value="Substrate Binding Domain Of DNAk, Chain A, domain 1"/>
    <property type="match status" value="1"/>
</dbReference>
<dbReference type="HAMAP" id="MF_00332">
    <property type="entry name" value="DnaK"/>
    <property type="match status" value="1"/>
</dbReference>
<dbReference type="InterPro" id="IPR043129">
    <property type="entry name" value="ATPase_NBD"/>
</dbReference>
<dbReference type="InterPro" id="IPR012725">
    <property type="entry name" value="Chaperone_DnaK"/>
</dbReference>
<dbReference type="InterPro" id="IPR018181">
    <property type="entry name" value="Heat_shock_70_CS"/>
</dbReference>
<dbReference type="InterPro" id="IPR029048">
    <property type="entry name" value="HSP70_C_sf"/>
</dbReference>
<dbReference type="InterPro" id="IPR029047">
    <property type="entry name" value="HSP70_peptide-bd_sf"/>
</dbReference>
<dbReference type="InterPro" id="IPR013126">
    <property type="entry name" value="Hsp_70_fam"/>
</dbReference>
<dbReference type="NCBIfam" id="NF001413">
    <property type="entry name" value="PRK00290.1"/>
    <property type="match status" value="1"/>
</dbReference>
<dbReference type="NCBIfam" id="TIGR02350">
    <property type="entry name" value="prok_dnaK"/>
    <property type="match status" value="1"/>
</dbReference>
<dbReference type="PANTHER" id="PTHR19375">
    <property type="entry name" value="HEAT SHOCK PROTEIN 70KDA"/>
    <property type="match status" value="1"/>
</dbReference>
<dbReference type="Pfam" id="PF00012">
    <property type="entry name" value="HSP70"/>
    <property type="match status" value="1"/>
</dbReference>
<dbReference type="PRINTS" id="PR00301">
    <property type="entry name" value="HEATSHOCK70"/>
</dbReference>
<dbReference type="SUPFAM" id="SSF53067">
    <property type="entry name" value="Actin-like ATPase domain"/>
    <property type="match status" value="2"/>
</dbReference>
<dbReference type="SUPFAM" id="SSF100934">
    <property type="entry name" value="Heat shock protein 70kD (HSP70), C-terminal subdomain"/>
    <property type="match status" value="1"/>
</dbReference>
<dbReference type="SUPFAM" id="SSF100920">
    <property type="entry name" value="Heat shock protein 70kD (HSP70), peptide-binding domain"/>
    <property type="match status" value="1"/>
</dbReference>
<dbReference type="PROSITE" id="PS00297">
    <property type="entry name" value="HSP70_1"/>
    <property type="match status" value="1"/>
</dbReference>
<dbReference type="PROSITE" id="PS00329">
    <property type="entry name" value="HSP70_2"/>
    <property type="match status" value="1"/>
</dbReference>
<dbReference type="PROSITE" id="PS01036">
    <property type="entry name" value="HSP70_3"/>
    <property type="match status" value="1"/>
</dbReference>
<reference key="1">
    <citation type="journal article" date="2006" name="PLoS Genet.">
        <title>Who ate whom? Adaptive Helicobacter genomic changes that accompanied a host jump from early humans to large felines.</title>
        <authorList>
            <person name="Eppinger M."/>
            <person name="Baar C."/>
            <person name="Linz B."/>
            <person name="Raddatz G."/>
            <person name="Lanz C."/>
            <person name="Keller H."/>
            <person name="Morelli G."/>
            <person name="Gressmann H."/>
            <person name="Achtman M."/>
            <person name="Schuster S.C."/>
        </authorList>
    </citation>
    <scope>NUCLEOTIDE SEQUENCE [LARGE SCALE GENOMIC DNA]</scope>
    <source>
        <strain>Sheeba</strain>
    </source>
</reference>
<feature type="chain" id="PRO_1000059577" description="Chaperone protein DnaK">
    <location>
        <begin position="1"/>
        <end position="620"/>
    </location>
</feature>
<feature type="region of interest" description="Disordered" evidence="2">
    <location>
        <begin position="597"/>
        <end position="620"/>
    </location>
</feature>
<feature type="modified residue" description="Phosphothreonine; by autocatalysis" evidence="1">
    <location>
        <position position="197"/>
    </location>
</feature>
<keyword id="KW-0067">ATP-binding</keyword>
<keyword id="KW-0143">Chaperone</keyword>
<keyword id="KW-0547">Nucleotide-binding</keyword>
<keyword id="KW-0597">Phosphoprotein</keyword>
<keyword id="KW-0346">Stress response</keyword>
<evidence type="ECO:0000255" key="1">
    <source>
        <dbReference type="HAMAP-Rule" id="MF_00332"/>
    </source>
</evidence>
<evidence type="ECO:0000256" key="2">
    <source>
        <dbReference type="SAM" id="MobiDB-lite"/>
    </source>
</evidence>
<comment type="function">
    <text evidence="1">Acts as a chaperone.</text>
</comment>
<comment type="induction">
    <text evidence="1">By stress conditions e.g. heat shock.</text>
</comment>
<comment type="similarity">
    <text evidence="1">Belongs to the heat shock protein 70 family.</text>
</comment>
<protein>
    <recommendedName>
        <fullName evidence="1">Chaperone protein DnaK</fullName>
    </recommendedName>
    <alternativeName>
        <fullName evidence="1">HSP70</fullName>
    </alternativeName>
    <alternativeName>
        <fullName evidence="1">Heat shock 70 kDa protein</fullName>
    </alternativeName>
    <alternativeName>
        <fullName evidence="1">Heat shock protein 70</fullName>
    </alternativeName>
</protein>
<accession>Q17VY4</accession>